<protein>
    <recommendedName>
        <fullName>Variant-silencing SET domain-containing protein</fullName>
        <shortName>PfSETvs</shortName>
        <ecNumber evidence="6">2.1.1.359</ecNumber>
    </recommendedName>
    <alternativeName>
        <fullName>SET domain-containing protein 2</fullName>
        <shortName>PfSET2</shortName>
    </alternativeName>
</protein>
<reference key="1">
    <citation type="journal article" date="2002" name="Nature">
        <title>Genome sequence of the human malaria parasite Plasmodium falciparum.</title>
        <authorList>
            <person name="Gardner M.J."/>
            <person name="Hall N."/>
            <person name="Fung E."/>
            <person name="White O."/>
            <person name="Berriman M."/>
            <person name="Hyman R.W."/>
            <person name="Carlton J.M."/>
            <person name="Pain A."/>
            <person name="Nelson K.E."/>
            <person name="Bowman S."/>
            <person name="Paulsen I.T."/>
            <person name="James K.D."/>
            <person name="Eisen J.A."/>
            <person name="Rutherford K.M."/>
            <person name="Salzberg S.L."/>
            <person name="Craig A."/>
            <person name="Kyes S."/>
            <person name="Chan M.-S."/>
            <person name="Nene V."/>
            <person name="Shallom S.J."/>
            <person name="Suh B."/>
            <person name="Peterson J."/>
            <person name="Angiuoli S."/>
            <person name="Pertea M."/>
            <person name="Allen J."/>
            <person name="Selengut J."/>
            <person name="Haft D."/>
            <person name="Mather M.W."/>
            <person name="Vaidya A.B."/>
            <person name="Martin D.M.A."/>
            <person name="Fairlamb A.H."/>
            <person name="Fraunholz M.J."/>
            <person name="Roos D.S."/>
            <person name="Ralph S.A."/>
            <person name="McFadden G.I."/>
            <person name="Cummings L.M."/>
            <person name="Subramanian G.M."/>
            <person name="Mungall C."/>
            <person name="Venter J.C."/>
            <person name="Carucci D.J."/>
            <person name="Hoffman S.L."/>
            <person name="Newbold C."/>
            <person name="Davis R.W."/>
            <person name="Fraser C.M."/>
            <person name="Barrell B.G."/>
        </authorList>
    </citation>
    <scope>NUCLEOTIDE SEQUENCE [LARGE SCALE GENOMIC DNA]</scope>
    <source>
        <strain>3D7</strain>
    </source>
</reference>
<reference key="2">
    <citation type="journal article" date="2002" name="Nature">
        <title>Sequence of Plasmodium falciparum chromosomes 1, 3-9 and 13.</title>
        <authorList>
            <person name="Hall N."/>
            <person name="Pain A."/>
            <person name="Berriman M."/>
            <person name="Churcher C.M."/>
            <person name="Harris B."/>
            <person name="Harris D."/>
            <person name="Mungall K.L."/>
            <person name="Bowman S."/>
            <person name="Atkin R."/>
            <person name="Baker S."/>
            <person name="Barron A."/>
            <person name="Brooks K."/>
            <person name="Buckee C.O."/>
            <person name="Burrows C."/>
            <person name="Cherevach I."/>
            <person name="Chillingworth C."/>
            <person name="Chillingworth T."/>
            <person name="Christodoulou Z."/>
            <person name="Clark L."/>
            <person name="Clark R."/>
            <person name="Corton C."/>
            <person name="Cronin A."/>
            <person name="Davies R.M."/>
            <person name="Davis P."/>
            <person name="Dear P."/>
            <person name="Dearden F."/>
            <person name="Doggett J."/>
            <person name="Feltwell T."/>
            <person name="Goble A."/>
            <person name="Goodhead I."/>
            <person name="Gwilliam R."/>
            <person name="Hamlin N."/>
            <person name="Hance Z."/>
            <person name="Harper D."/>
            <person name="Hauser H."/>
            <person name="Hornsby T."/>
            <person name="Holroyd S."/>
            <person name="Horrocks P."/>
            <person name="Humphray S."/>
            <person name="Jagels K."/>
            <person name="James K.D."/>
            <person name="Johnson D."/>
            <person name="Kerhornou A."/>
            <person name="Knights A."/>
            <person name="Konfortov B."/>
            <person name="Kyes S."/>
            <person name="Larke N."/>
            <person name="Lawson D."/>
            <person name="Lennard N."/>
            <person name="Line A."/>
            <person name="Maddison M."/>
            <person name="Mclean J."/>
            <person name="Mooney P."/>
            <person name="Moule S."/>
            <person name="Murphy L."/>
            <person name="Oliver K."/>
            <person name="Ormond D."/>
            <person name="Price C."/>
            <person name="Quail M.A."/>
            <person name="Rabbinowitsch E."/>
            <person name="Rajandream M.A."/>
            <person name="Rutter S."/>
            <person name="Rutherford K.M."/>
            <person name="Sanders M."/>
            <person name="Simmonds M."/>
            <person name="Seeger K."/>
            <person name="Sharp S."/>
            <person name="Smith R."/>
            <person name="Squares R."/>
            <person name="Squares S."/>
            <person name="Stevens K."/>
            <person name="Taylor K."/>
            <person name="Tivey A."/>
            <person name="Unwin L."/>
            <person name="Whitehead S."/>
            <person name="Woodward J.R."/>
            <person name="Sulston J.E."/>
            <person name="Craig A."/>
            <person name="Newbold C."/>
            <person name="Barrell B.G."/>
        </authorList>
    </citation>
    <scope>NUCLEOTIDE SEQUENCE [LARGE SCALE GENOMIC DNA]</scope>
    <source>
        <strain>3D7</strain>
    </source>
</reference>
<reference key="3">
    <citation type="journal article" date="2008" name="Int. J. Parasitol.">
        <title>Histone lysine methyltransferases and demethylases in Plasmodium falciparum.</title>
        <authorList>
            <person name="Cui L."/>
            <person name="Fan Q."/>
            <person name="Cui L."/>
            <person name="Miao J."/>
        </authorList>
    </citation>
    <scope>DEVELOPMENTAL STAGE</scope>
</reference>
<reference key="4">
    <citation type="journal article" date="2013" name="Nature">
        <title>PfSETvs methylation of histone H3K36 represses virulence genes in Plasmodium falciparum.</title>
        <authorList>
            <person name="Jiang L."/>
            <person name="Mu J."/>
            <person name="Zhang Q."/>
            <person name="Ni T."/>
            <person name="Srinivasan P."/>
            <person name="Rayavara K."/>
            <person name="Yang W."/>
            <person name="Turner L."/>
            <person name="Lavstsen T."/>
            <person name="Theander T.G."/>
            <person name="Peng W."/>
            <person name="Wei G."/>
            <person name="Jing Q."/>
            <person name="Wakabayashi Y."/>
            <person name="Bansal A."/>
            <person name="Luo Y."/>
            <person name="Ribeiro J.M."/>
            <person name="Scherf A."/>
            <person name="Aravind L."/>
            <person name="Zhu J."/>
            <person name="Zhao K."/>
            <person name="Miller L.H."/>
        </authorList>
    </citation>
    <scope>FUNCTION</scope>
    <scope>DISRUPTION PHENOTYPE</scope>
    <scope>SUBCELLULAR LOCATION</scope>
    <source>
        <strain>3D7</strain>
    </source>
</reference>
<feature type="chain" id="PRO_0000424016" description="Variant-silencing SET domain-containing protein">
    <location>
        <begin position="1"/>
        <end position="2548"/>
    </location>
</feature>
<feature type="domain" description="AWS" evidence="2">
    <location>
        <begin position="2067"/>
        <end position="2117"/>
    </location>
</feature>
<feature type="domain" description="SET" evidence="1">
    <location>
        <begin position="2119"/>
        <end position="2240"/>
    </location>
</feature>
<feature type="zinc finger region" description="PHD-type 1">
    <location>
        <begin position="787"/>
        <end position="846"/>
    </location>
</feature>
<feature type="zinc finger region" description="PHD-type 2">
    <location>
        <begin position="2423"/>
        <end position="2471"/>
    </location>
</feature>
<feature type="region of interest" description="Disordered" evidence="3">
    <location>
        <begin position="37"/>
        <end position="61"/>
    </location>
</feature>
<feature type="region of interest" description="Disordered" evidence="3">
    <location>
        <begin position="336"/>
        <end position="379"/>
    </location>
</feature>
<feature type="region of interest" description="Disordered" evidence="3">
    <location>
        <begin position="585"/>
        <end position="629"/>
    </location>
</feature>
<feature type="region of interest" description="Disordered" evidence="3">
    <location>
        <begin position="929"/>
        <end position="1054"/>
    </location>
</feature>
<feature type="region of interest" description="Disordered" evidence="3">
    <location>
        <begin position="1546"/>
        <end position="1575"/>
    </location>
</feature>
<feature type="region of interest" description="Disordered" evidence="3">
    <location>
        <begin position="1713"/>
        <end position="1732"/>
    </location>
</feature>
<feature type="region of interest" description="Disordered" evidence="3">
    <location>
        <begin position="1772"/>
        <end position="1822"/>
    </location>
</feature>
<feature type="compositionally biased region" description="Acidic residues" evidence="3">
    <location>
        <begin position="37"/>
        <end position="48"/>
    </location>
</feature>
<feature type="compositionally biased region" description="Basic and acidic residues" evidence="3">
    <location>
        <begin position="336"/>
        <end position="357"/>
    </location>
</feature>
<feature type="compositionally biased region" description="Acidic residues" evidence="3">
    <location>
        <begin position="358"/>
        <end position="378"/>
    </location>
</feature>
<feature type="compositionally biased region" description="Low complexity" evidence="3">
    <location>
        <begin position="602"/>
        <end position="616"/>
    </location>
</feature>
<feature type="compositionally biased region" description="Polar residues" evidence="3">
    <location>
        <begin position="617"/>
        <end position="629"/>
    </location>
</feature>
<feature type="compositionally biased region" description="Basic residues" evidence="3">
    <location>
        <begin position="929"/>
        <end position="944"/>
    </location>
</feature>
<feature type="compositionally biased region" description="Acidic residues" evidence="3">
    <location>
        <begin position="986"/>
        <end position="1016"/>
    </location>
</feature>
<feature type="compositionally biased region" description="Low complexity" evidence="3">
    <location>
        <begin position="1017"/>
        <end position="1050"/>
    </location>
</feature>
<feature type="compositionally biased region" description="Low complexity" evidence="3">
    <location>
        <begin position="1551"/>
        <end position="1572"/>
    </location>
</feature>
<feature type="compositionally biased region" description="Polar residues" evidence="3">
    <location>
        <begin position="1714"/>
        <end position="1732"/>
    </location>
</feature>
<feature type="binding site" evidence="1">
    <location>
        <position position="2239"/>
    </location>
    <ligand>
        <name>S-adenosyl-L-methionine</name>
        <dbReference type="ChEBI" id="CHEBI:59789"/>
    </ligand>
</feature>
<gene>
    <name type="primary">SETVS</name>
    <name type="synonym">SET2</name>
    <name type="ORF">MAL13P1.122</name>
</gene>
<dbReference type="EC" id="2.1.1.359" evidence="6"/>
<dbReference type="EMBL" id="AL844509">
    <property type="protein sequence ID" value="CAD52368.1"/>
    <property type="molecule type" value="Genomic_DNA"/>
</dbReference>
<dbReference type="RefSeq" id="XP_001349960.1">
    <property type="nucleotide sequence ID" value="XM_001349924.1"/>
</dbReference>
<dbReference type="SMR" id="Q8IE95"/>
<dbReference type="BioGRID" id="1208944">
    <property type="interactions" value="1"/>
</dbReference>
<dbReference type="FunCoup" id="Q8IE95">
    <property type="interactions" value="43"/>
</dbReference>
<dbReference type="IntAct" id="Q8IE95">
    <property type="interactions" value="1"/>
</dbReference>
<dbReference type="STRING" id="36329.Q8IE95"/>
<dbReference type="PaxDb" id="5833-MAL13P1.122"/>
<dbReference type="EnsemblProtists" id="CAD52368">
    <property type="protein sequence ID" value="CAD52368"/>
    <property type="gene ID" value="PF3D7_1322100"/>
</dbReference>
<dbReference type="KEGG" id="pfa:PF3D7_1322100"/>
<dbReference type="VEuPathDB" id="PlasmoDB:PF3D7_1322100"/>
<dbReference type="HOGENOM" id="CLU_228197_0_0_1"/>
<dbReference type="InParanoid" id="Q8IE95"/>
<dbReference type="OMA" id="NSHETNE"/>
<dbReference type="OrthoDB" id="308383at2759"/>
<dbReference type="PhylomeDB" id="Q8IE95"/>
<dbReference type="Reactome" id="R-PFA-3214841">
    <property type="pathway name" value="PKMTs methylate histone lysines"/>
</dbReference>
<dbReference type="Proteomes" id="UP000001450">
    <property type="component" value="Chromosome 13"/>
</dbReference>
<dbReference type="GO" id="GO:0000785">
    <property type="term" value="C:chromatin"/>
    <property type="evidence" value="ECO:0000318"/>
    <property type="project" value="GO_Central"/>
</dbReference>
<dbReference type="GO" id="GO:0005694">
    <property type="term" value="C:chromosome"/>
    <property type="evidence" value="ECO:0000314"/>
    <property type="project" value="UniProtKB"/>
</dbReference>
<dbReference type="GO" id="GO:0034399">
    <property type="term" value="C:nuclear periphery"/>
    <property type="evidence" value="ECO:0000314"/>
    <property type="project" value="GeneDB"/>
</dbReference>
<dbReference type="GO" id="GO:0005634">
    <property type="term" value="C:nucleus"/>
    <property type="evidence" value="ECO:0000318"/>
    <property type="project" value="GO_Central"/>
</dbReference>
<dbReference type="GO" id="GO:0003682">
    <property type="term" value="F:chromatin binding"/>
    <property type="evidence" value="ECO:0000314"/>
    <property type="project" value="UniProtKB"/>
</dbReference>
<dbReference type="GO" id="GO:0046975">
    <property type="term" value="F:histone H3K36 methyltransferase activity"/>
    <property type="evidence" value="ECO:0000314"/>
    <property type="project" value="GeneDB"/>
</dbReference>
<dbReference type="GO" id="GO:0140955">
    <property type="term" value="F:histone H3K36 trimethyltransferase activity"/>
    <property type="evidence" value="ECO:0007669"/>
    <property type="project" value="UniProtKB-EC"/>
</dbReference>
<dbReference type="GO" id="GO:0008270">
    <property type="term" value="F:zinc ion binding"/>
    <property type="evidence" value="ECO:0007669"/>
    <property type="project" value="UniProtKB-KW"/>
</dbReference>
<dbReference type="GO" id="GO:0020033">
    <property type="term" value="P:antigenic variation"/>
    <property type="evidence" value="ECO:0000315"/>
    <property type="project" value="GeneDB"/>
</dbReference>
<dbReference type="GO" id="GO:0032259">
    <property type="term" value="P:methylation"/>
    <property type="evidence" value="ECO:0007669"/>
    <property type="project" value="UniProtKB-KW"/>
</dbReference>
<dbReference type="GO" id="GO:0006355">
    <property type="term" value="P:regulation of DNA-templated transcription"/>
    <property type="evidence" value="ECO:0000314"/>
    <property type="project" value="GeneDB"/>
</dbReference>
<dbReference type="CDD" id="cd10531">
    <property type="entry name" value="SET_SETD2-like"/>
    <property type="match status" value="1"/>
</dbReference>
<dbReference type="FunFam" id="2.170.270.10:FF:000042">
    <property type="entry name" value="Variant-silencing SET protein"/>
    <property type="match status" value="1"/>
</dbReference>
<dbReference type="Gene3D" id="2.170.270.10">
    <property type="entry name" value="SET domain"/>
    <property type="match status" value="1"/>
</dbReference>
<dbReference type="InterPro" id="IPR006560">
    <property type="entry name" value="AWS_dom"/>
</dbReference>
<dbReference type="InterPro" id="IPR050777">
    <property type="entry name" value="SET2_Histone-Lys_MeTrsfase"/>
</dbReference>
<dbReference type="InterPro" id="IPR001214">
    <property type="entry name" value="SET_dom"/>
</dbReference>
<dbReference type="InterPro" id="IPR046341">
    <property type="entry name" value="SET_dom_sf"/>
</dbReference>
<dbReference type="InterPro" id="IPR001965">
    <property type="entry name" value="Znf_PHD"/>
</dbReference>
<dbReference type="PANTHER" id="PTHR22884">
    <property type="entry name" value="SET DOMAIN PROTEINS"/>
    <property type="match status" value="1"/>
</dbReference>
<dbReference type="Pfam" id="PF00856">
    <property type="entry name" value="SET"/>
    <property type="match status" value="1"/>
</dbReference>
<dbReference type="SMART" id="SM00249">
    <property type="entry name" value="PHD"/>
    <property type="match status" value="4"/>
</dbReference>
<dbReference type="SMART" id="SM00317">
    <property type="entry name" value="SET"/>
    <property type="match status" value="1"/>
</dbReference>
<dbReference type="SUPFAM" id="SSF82199">
    <property type="entry name" value="SET domain"/>
    <property type="match status" value="1"/>
</dbReference>
<dbReference type="PROSITE" id="PS51215">
    <property type="entry name" value="AWS"/>
    <property type="match status" value="1"/>
</dbReference>
<dbReference type="PROSITE" id="PS50280">
    <property type="entry name" value="SET"/>
    <property type="match status" value="1"/>
</dbReference>
<organism>
    <name type="scientific">Plasmodium falciparum (isolate 3D7)</name>
    <dbReference type="NCBI Taxonomy" id="36329"/>
    <lineage>
        <taxon>Eukaryota</taxon>
        <taxon>Sar</taxon>
        <taxon>Alveolata</taxon>
        <taxon>Apicomplexa</taxon>
        <taxon>Aconoidasida</taxon>
        <taxon>Haemosporida</taxon>
        <taxon>Plasmodiidae</taxon>
        <taxon>Plasmodium</taxon>
        <taxon>Plasmodium (Laverania)</taxon>
    </lineage>
</organism>
<evidence type="ECO:0000255" key="1">
    <source>
        <dbReference type="PROSITE-ProRule" id="PRU00190"/>
    </source>
</evidence>
<evidence type="ECO:0000255" key="2">
    <source>
        <dbReference type="PROSITE-ProRule" id="PRU00562"/>
    </source>
</evidence>
<evidence type="ECO:0000256" key="3">
    <source>
        <dbReference type="SAM" id="MobiDB-lite"/>
    </source>
</evidence>
<evidence type="ECO:0000269" key="4">
    <source>
    </source>
</evidence>
<evidence type="ECO:0000269" key="5">
    <source>
    </source>
</evidence>
<evidence type="ECO:0000305" key="6">
    <source>
    </source>
</evidence>
<name>SETVS_PLAF7</name>
<keyword id="KW-0156">Chromatin regulator</keyword>
<keyword id="KW-0158">Chromosome</keyword>
<keyword id="KW-0461">Malaria</keyword>
<keyword id="KW-0479">Metal-binding</keyword>
<keyword id="KW-0489">Methyltransferase</keyword>
<keyword id="KW-0539">Nucleus</keyword>
<keyword id="KW-1185">Reference proteome</keyword>
<keyword id="KW-0677">Repeat</keyword>
<keyword id="KW-0949">S-adenosyl-L-methionine</keyword>
<keyword id="KW-0808">Transferase</keyword>
<keyword id="KW-0862">Zinc</keyword>
<keyword id="KW-0863">Zinc-finger</keyword>
<sequence>MEYKLFKNKKILNEKVNELTKKNRQRNTLDHINCIEIDDDDDDDNDNNEEPKEMNINKTNNNNNDILMKSCNDIRRNTTFYRHNVINEEQKNFEYLLSRKKKNVDSIDNVNFYDFMKNDFFNIFNNNIISEHKKTNQIVNQINNNVDTSKNVVYNINYDEHKGEVVNLSFDKKGKETYPQVDIELYNKKMNPRYQNINEQNTCQTSDDNTTYRNVYSDNCALNSSYTNFLRNKSLKYKKCYKQNRQDESTGAEFDYNLDESVYYDDCNNKLYKRSFLKNNKNIIEKGREEHKQDIYNNISDICKSYIKNFDYLNKRIFHNKSKIWKLSNKKVTIHGDPKKRIERNKQEIEDHRREQDGENDQEEDNYDDYDDEDDDDDNCHIYDNYDDYLENDDYDNHNYFYHKNHDVNKIRKIQNKNCSTDFINYTSINNRNMECPNKNADNLKNMDSFLLYMKERKIKKKKNINDHMENQLSDTLNNSNNYNKDVYDSYYDDMNFCYDKDYNMILKKGVNSNRTKSLDRYPNNISHNYVNNISSEIIKYCKDNNITLKSDIKNIINHFNKKYANSSLTNSKISMYENGYPQRSVDRIYDSSTNDPKSDMNGSNNNNSSSNNNNNITHITNDCDNTQTNKNKHYVNSIVNSIVNIFQKRKNVNEKKENINEQNCISFNTNLRNNKLNNNDDLCSNSYVNNINRNKQITNNENKKDNMLMLKGTYHGDSLNESINIEHNLKNNNSMSDVNFVLNNNDNDKKQNSYDISEVSINCYYDDVIKCYMDYTMHGMEDETNFYLCEFCEQNIFDMNNMIKKDKAKECMYRCNISCGRTFHKACVCYIKNNDNYICFFCLYDINFCTLCKEVLTNDSLLPCYYPLCSVSMHTKCVEKLLLFNSHCLKQYESIILPRDINIEQQKNTQKSASDGIIEQPLNIKKKIKRRHIYRKRRRRGPRKSQITTSNKKINKSELAGGSIINGVDMEQENDQGGNNNNNDDNNDDNNDNNDDNNDNNDDNNDNNDNNDDNNNDNNNNNNNDNNDNNNNNNNNNNNNDNDNNNNNNCDENFKNHLLKKDLLRDEPHHNNYDKILECNTEIKMENNVNMSEEPIYNKLFNGKEETLNNENDEKIIVLKKFICPLHICYVCKEFDINNTESSKKELKNNLFRCIKCYKSVHRKCMNQLKNNDNNDNDNNNNNINIYIISHKHRIICCANHMDDYKKEHMEYLKYIKEVKDICKLDEPIHNNNNNNNILSEKGFYGDENNLSISKFHNNSSYEPIKNKETCIKGKDSNYLSHDNKGITDMNNTNKMNVLNLKSCMVNDMNTSERKKKKSCESRGSNITNKKVVFDLTDELNEKEKSPPLDNVQNKIIYGDNEIEKNVNICQKEDGGLNLGSMNILSIGKNHMRTNNNNNNDSSCSSNNNIISVENEYILKNKNLNKSNNSLLDHNNKIKKNSTLNIKECTDSCINVDEFINKNQNEKDISLENIDALCIKRKRNVSHPYNDTLDDTNILKDISNNKSYYVNISKKKRNVSFNYKEEFMKGDEQFLLKGNNLESNEKNTKNKLCNNDNNNNNNNKGKNTKYNTLDRKNNKNKQINDTINKEPENINHNMQNQQLTDNFVEDNMKYKQEIYHIKLSHILSIEKGLLSLQEINIDQMNDECKKHISILCTFRQDFINYVIFLFSKRLHKENQIEPVNGVDHKKEGNIYHAERKQEKINHNAKHNEQGSINNAKHNEQGSINNAKHNEQDSINNAKQNEQDSINNAKHNEQDSINNAKHNEQDSINNAKHNEDDSLNNAKHNEDDSLNNAKQNEEDSLNNAKQNEEDILNNDDHRNQEELHERWKENMVYNFLANYDKKEKKYISKKEEDAIIKILSNDIVGIMKKELKISLYDFIMLKKKTISTNENHKDNDESVVYVEDGKHHCNDINKMKDNVNNDIIPNIKYNNNNYDDVINTKEKESIPDASYMKVTRNQSIMNNDIYNNNIQIIEKERIMNNNKKNYYDEEKKREEYNGLFSKGKKKSFKNNKMDLKTFFSLTNNGYKVDISILKKYSSFLKFEYISKNIYLNDKNKNLLACKSDDYKCLCQGECNLYTCYNSLSNIQCSKSRCNLPEKIQDRKCFNRPFRKSFVKDLEIKKTEKTGYGVFCKRDIKNGELICEYVGEVLGKREFEKRLEVYQEESKKTDMYNWYIIQINKDVYIDSGKKGSISRFINHSCSPNSVSQKWIVRGFYRIGIFALRDIPSGEEITYNYSYNFLFNNFECLCKSPNCMNYHLLKKGESSGASNIIKETELLNNTIFNPVENFHNLHGKMQDWNIFIEEAHTRLLYEYNKMNAFNLRLMECYSTWIFYDMNFQKNQFFSLKSKPYNVSAEFWKVLVSAFSDGEKNIINTFNLFLPSLIKIGQLRRIQQYSYILHNIIGLEHDMWNLIDKGFADDEVCRKCKSCGNLTMCDKCFQSYHQLCGNMHSKMYKNNELVLCRFCQKYDYKIQWIKENHGSKMKTCIEIRSKAFYKLNRDIMTLLEESVKYTQNQSLDSIHAHNTKAFKSKKLKLRKFQYKYVKI</sequence>
<accession>Q8IE95</accession>
<proteinExistence type="evidence at transcript level"/>
<comment type="function">
    <text evidence="5">Histone methyltransferase that specifically represses expression of the surface antigen-coding var genes by mediating trimethylation of 'Lys-36' of histone H3 (H3K36me3) on var genes. SETVS-dependent H3K36me3 is specifically involved in var genes silencing, a central step malaria pathogenesis: each parasite contains 60 distinct var genes that each code for a different PfEMP1 protein. During infection, the clonal parasite population expresses only 1 gene at a time, while the 59 other var genes are silenced. The parasite then switches to the expression of a new variant antigen as an immune-evasion mechanism to avoid the host antibody response. Represses expression of both var mRNA and antisense long non-coding RNA.</text>
</comment>
<comment type="catalytic activity">
    <reaction evidence="6">
        <text>L-lysyl(36)-[histone H3] + 3 S-adenosyl-L-methionine = N(6),N(6),N(6)-trimethyl-L-lysyl(36)-[histone H3] + 3 S-adenosyl-L-homocysteine + 3 H(+)</text>
        <dbReference type="Rhea" id="RHEA:60324"/>
        <dbReference type="Rhea" id="RHEA-COMP:9785"/>
        <dbReference type="Rhea" id="RHEA-COMP:15536"/>
        <dbReference type="ChEBI" id="CHEBI:15378"/>
        <dbReference type="ChEBI" id="CHEBI:29969"/>
        <dbReference type="ChEBI" id="CHEBI:57856"/>
        <dbReference type="ChEBI" id="CHEBI:59789"/>
        <dbReference type="ChEBI" id="CHEBI:61961"/>
        <dbReference type="EC" id="2.1.1.359"/>
    </reaction>
</comment>
<comment type="subcellular location">
    <subcellularLocation>
        <location evidence="5">Nucleus</location>
    </subcellularLocation>
    <subcellularLocation>
        <location evidence="5">Chromosome</location>
    </subcellularLocation>
    <text>Localizes along the entire gene body of silent var genes, including the transcription start site of var genes and the respective intronic antisense promoter.</text>
</comment>
<comment type="developmental stage">
    <text evidence="4">Highly expressed in early trophozoite stages. Expression is then reduced in late trophozoites and elevated again in schizonts.</text>
</comment>
<comment type="disruption phenotype">
    <text evidence="5">Leads to expression of all var genes in the ring stage.</text>
</comment>
<comment type="miscellaneous">
    <text evidence="6">Parasites lacking SETVS could be used as an antimalarial vaccine because of its ability to express all PfEMP1 proteins, to which the antibody would provide efficient protective immunity against malaria.</text>
</comment>
<comment type="similarity">
    <text evidence="1">Belongs to the class V-like SAM-binding methyltransferase superfamily.</text>
</comment>